<accession>C6E7E7</accession>
<proteinExistence type="inferred from homology"/>
<protein>
    <recommendedName>
        <fullName evidence="1">7-cyano-7-deazaguanine synthase</fullName>
        <ecNumber evidence="1">6.3.4.20</ecNumber>
    </recommendedName>
    <alternativeName>
        <fullName evidence="1">7-cyano-7-carbaguanine synthase</fullName>
    </alternativeName>
    <alternativeName>
        <fullName evidence="1">PreQ(0) synthase</fullName>
    </alternativeName>
    <alternativeName>
        <fullName evidence="1">Queuosine biosynthesis protein QueC</fullName>
    </alternativeName>
</protein>
<name>QUEC_GEOSM</name>
<evidence type="ECO:0000255" key="1">
    <source>
        <dbReference type="HAMAP-Rule" id="MF_01633"/>
    </source>
</evidence>
<reference key="1">
    <citation type="submission" date="2009-07" db="EMBL/GenBank/DDBJ databases">
        <title>Complete sequence of Geobacter sp. M21.</title>
        <authorList>
            <consortium name="US DOE Joint Genome Institute"/>
            <person name="Lucas S."/>
            <person name="Copeland A."/>
            <person name="Lapidus A."/>
            <person name="Glavina del Rio T."/>
            <person name="Dalin E."/>
            <person name="Tice H."/>
            <person name="Bruce D."/>
            <person name="Goodwin L."/>
            <person name="Pitluck S."/>
            <person name="Saunders E."/>
            <person name="Brettin T."/>
            <person name="Detter J.C."/>
            <person name="Han C."/>
            <person name="Larimer F."/>
            <person name="Land M."/>
            <person name="Hauser L."/>
            <person name="Kyrpides N."/>
            <person name="Ovchinnikova G."/>
            <person name="Lovley D."/>
        </authorList>
    </citation>
    <scope>NUCLEOTIDE SEQUENCE [LARGE SCALE GENOMIC DNA]</scope>
    <source>
        <strain>M21</strain>
    </source>
</reference>
<keyword id="KW-0067">ATP-binding</keyword>
<keyword id="KW-0436">Ligase</keyword>
<keyword id="KW-0479">Metal-binding</keyword>
<keyword id="KW-0547">Nucleotide-binding</keyword>
<keyword id="KW-0671">Queuosine biosynthesis</keyword>
<keyword id="KW-0862">Zinc</keyword>
<comment type="function">
    <text evidence="1">Catalyzes the ATP-dependent conversion of 7-carboxy-7-deazaguanine (CDG) to 7-cyano-7-deazaguanine (preQ(0)).</text>
</comment>
<comment type="catalytic activity">
    <reaction evidence="1">
        <text>7-carboxy-7-deazaguanine + NH4(+) + ATP = 7-cyano-7-deazaguanine + ADP + phosphate + H2O + H(+)</text>
        <dbReference type="Rhea" id="RHEA:27982"/>
        <dbReference type="ChEBI" id="CHEBI:15377"/>
        <dbReference type="ChEBI" id="CHEBI:15378"/>
        <dbReference type="ChEBI" id="CHEBI:28938"/>
        <dbReference type="ChEBI" id="CHEBI:30616"/>
        <dbReference type="ChEBI" id="CHEBI:43474"/>
        <dbReference type="ChEBI" id="CHEBI:45075"/>
        <dbReference type="ChEBI" id="CHEBI:61036"/>
        <dbReference type="ChEBI" id="CHEBI:456216"/>
        <dbReference type="EC" id="6.3.4.20"/>
    </reaction>
</comment>
<comment type="cofactor">
    <cofactor evidence="1">
        <name>Zn(2+)</name>
        <dbReference type="ChEBI" id="CHEBI:29105"/>
    </cofactor>
    <text evidence="1">Binds 1 zinc ion per subunit.</text>
</comment>
<comment type="pathway">
    <text evidence="1">Purine metabolism; 7-cyano-7-deazaguanine biosynthesis.</text>
</comment>
<comment type="similarity">
    <text evidence="1">Belongs to the QueC family.</text>
</comment>
<feature type="chain" id="PRO_1000215792" description="7-cyano-7-deazaguanine synthase">
    <location>
        <begin position="1"/>
        <end position="225"/>
    </location>
</feature>
<feature type="binding site" evidence="1">
    <location>
        <begin position="9"/>
        <end position="19"/>
    </location>
    <ligand>
        <name>ATP</name>
        <dbReference type="ChEBI" id="CHEBI:30616"/>
    </ligand>
</feature>
<feature type="binding site" evidence="1">
    <location>
        <position position="188"/>
    </location>
    <ligand>
        <name>Zn(2+)</name>
        <dbReference type="ChEBI" id="CHEBI:29105"/>
    </ligand>
</feature>
<feature type="binding site" evidence="1">
    <location>
        <position position="198"/>
    </location>
    <ligand>
        <name>Zn(2+)</name>
        <dbReference type="ChEBI" id="CHEBI:29105"/>
    </ligand>
</feature>
<feature type="binding site" evidence="1">
    <location>
        <position position="201"/>
    </location>
    <ligand>
        <name>Zn(2+)</name>
        <dbReference type="ChEBI" id="CHEBI:29105"/>
    </ligand>
</feature>
<feature type="binding site" evidence="1">
    <location>
        <position position="204"/>
    </location>
    <ligand>
        <name>Zn(2+)</name>
        <dbReference type="ChEBI" id="CHEBI:29105"/>
    </ligand>
</feature>
<gene>
    <name evidence="1" type="primary">queC</name>
    <name type="ordered locus">GM21_3788</name>
</gene>
<dbReference type="EC" id="6.3.4.20" evidence="1"/>
<dbReference type="EMBL" id="CP001661">
    <property type="protein sequence ID" value="ACT19807.1"/>
    <property type="molecule type" value="Genomic_DNA"/>
</dbReference>
<dbReference type="SMR" id="C6E7E7"/>
<dbReference type="STRING" id="443144.GM21_3788"/>
<dbReference type="KEGG" id="gem:GM21_3788"/>
<dbReference type="eggNOG" id="COG0603">
    <property type="taxonomic scope" value="Bacteria"/>
</dbReference>
<dbReference type="HOGENOM" id="CLU_081854_1_1_7"/>
<dbReference type="OrthoDB" id="9789567at2"/>
<dbReference type="UniPathway" id="UPA00391"/>
<dbReference type="GO" id="GO:0005524">
    <property type="term" value="F:ATP binding"/>
    <property type="evidence" value="ECO:0007669"/>
    <property type="project" value="UniProtKB-UniRule"/>
</dbReference>
<dbReference type="GO" id="GO:0016879">
    <property type="term" value="F:ligase activity, forming carbon-nitrogen bonds"/>
    <property type="evidence" value="ECO:0007669"/>
    <property type="project" value="UniProtKB-UniRule"/>
</dbReference>
<dbReference type="GO" id="GO:0008270">
    <property type="term" value="F:zinc ion binding"/>
    <property type="evidence" value="ECO:0007669"/>
    <property type="project" value="UniProtKB-UniRule"/>
</dbReference>
<dbReference type="GO" id="GO:0008616">
    <property type="term" value="P:queuosine biosynthetic process"/>
    <property type="evidence" value="ECO:0007669"/>
    <property type="project" value="UniProtKB-UniRule"/>
</dbReference>
<dbReference type="CDD" id="cd01995">
    <property type="entry name" value="QueC-like"/>
    <property type="match status" value="1"/>
</dbReference>
<dbReference type="FunFam" id="3.40.50.620:FF:000131">
    <property type="entry name" value="7-cyano-7-deazaguanine synthase"/>
    <property type="match status" value="1"/>
</dbReference>
<dbReference type="Gene3D" id="3.40.50.620">
    <property type="entry name" value="HUPs"/>
    <property type="match status" value="1"/>
</dbReference>
<dbReference type="HAMAP" id="MF_01633">
    <property type="entry name" value="QueC"/>
    <property type="match status" value="1"/>
</dbReference>
<dbReference type="InterPro" id="IPR018317">
    <property type="entry name" value="QueC"/>
</dbReference>
<dbReference type="InterPro" id="IPR014729">
    <property type="entry name" value="Rossmann-like_a/b/a_fold"/>
</dbReference>
<dbReference type="NCBIfam" id="TIGR00364">
    <property type="entry name" value="7-cyano-7-deazaguanine synthase QueC"/>
    <property type="match status" value="1"/>
</dbReference>
<dbReference type="PANTHER" id="PTHR42914">
    <property type="entry name" value="7-CYANO-7-DEAZAGUANINE SYNTHASE"/>
    <property type="match status" value="1"/>
</dbReference>
<dbReference type="PANTHER" id="PTHR42914:SF1">
    <property type="entry name" value="7-CYANO-7-DEAZAGUANINE SYNTHASE"/>
    <property type="match status" value="1"/>
</dbReference>
<dbReference type="Pfam" id="PF06508">
    <property type="entry name" value="QueC"/>
    <property type="match status" value="1"/>
</dbReference>
<dbReference type="PIRSF" id="PIRSF006293">
    <property type="entry name" value="ExsB"/>
    <property type="match status" value="1"/>
</dbReference>
<dbReference type="SUPFAM" id="SSF52402">
    <property type="entry name" value="Adenine nucleotide alpha hydrolases-like"/>
    <property type="match status" value="1"/>
</dbReference>
<organism>
    <name type="scientific">Geobacter sp. (strain M21)</name>
    <dbReference type="NCBI Taxonomy" id="443144"/>
    <lineage>
        <taxon>Bacteria</taxon>
        <taxon>Pseudomonadati</taxon>
        <taxon>Thermodesulfobacteriota</taxon>
        <taxon>Desulfuromonadia</taxon>
        <taxon>Geobacterales</taxon>
        <taxon>Geobacteraceae</taxon>
        <taxon>Geobacter</taxon>
    </lineage>
</organism>
<sequence>MQKKAVILYSGGLDSTTCLAIAKKQGFAPYALSFSYGQRHQQELEVAKLNARPMGAVDHLLVEFDLRKMGGSALTSDIEVPKEGVGEEIPVTYVPARNTIFLSFALGWAETLDCFDIFIGVNALDYSGYPDCRPEFISAYETMANLATKAGVEGKRLQIHTPLISLTKAEIIQKGISLGVDYSKTHSCYDPAEDGAACGRCDSCRLRLKGFAEAGVTDPVRYQKL</sequence>